<evidence type="ECO:0000250" key="1"/>
<evidence type="ECO:0000255" key="2"/>
<evidence type="ECO:0000255" key="3">
    <source>
        <dbReference type="PROSITE-ProRule" id="PRU00274"/>
    </source>
</evidence>
<evidence type="ECO:0000305" key="4"/>
<evidence type="ECO:0000312" key="5">
    <source>
        <dbReference type="RGD" id="3063"/>
    </source>
</evidence>
<accession>Q06606</accession>
<protein>
    <recommendedName>
        <fullName evidence="4">Granzyme-like protein 2</fullName>
        <ecNumber>3.4.21.-</ecNumber>
    </recommendedName>
    <alternativeName>
        <fullName>GLP-2</fullName>
    </alternativeName>
    <alternativeName>
        <fullName>Granzyme-like protein II</fullName>
        <shortName>GLP II</shortName>
    </alternativeName>
    <alternativeName>
        <fullName>Mast cell protease 10</fullName>
        <shortName>rMCP-10</shortName>
    </alternativeName>
    <alternativeName>
        <fullName>Mast cell protease X</fullName>
        <shortName>rMCP-X</shortName>
    </alternativeName>
</protein>
<comment type="function">
    <text>This enzyme is necessary for target cell lysis in cell-mediated immune responses.</text>
</comment>
<comment type="tissue specificity">
    <text>Duodenum, lung and spleen.</text>
</comment>
<comment type="similarity">
    <text evidence="3">Belongs to the peptidase S1 family. Granzyme subfamily.</text>
</comment>
<dbReference type="EC" id="3.4.21.-"/>
<dbReference type="EMBL" id="X68657">
    <property type="protein sequence ID" value="CAA48624.1"/>
    <property type="molecule type" value="mRNA"/>
</dbReference>
<dbReference type="PIR" id="S33756">
    <property type="entry name" value="S33756"/>
</dbReference>
<dbReference type="RefSeq" id="NP_058842.3">
    <property type="nucleotide sequence ID" value="NM_017146.3"/>
</dbReference>
<dbReference type="RefSeq" id="NP_067609.1">
    <property type="nucleotide sequence ID" value="NM_021598.2"/>
</dbReference>
<dbReference type="RefSeq" id="XP_003752852.1">
    <property type="nucleotide sequence ID" value="XM_003752804.4"/>
</dbReference>
<dbReference type="SMR" id="Q06606"/>
<dbReference type="FunCoup" id="Q06606">
    <property type="interactions" value="21"/>
</dbReference>
<dbReference type="STRING" id="10116.ENSRNOP00000066083"/>
<dbReference type="MEROPS" id="S01.008"/>
<dbReference type="GlyCosmos" id="Q06606">
    <property type="glycosylation" value="2 sites, No reported glycans"/>
</dbReference>
<dbReference type="GlyGen" id="Q06606">
    <property type="glycosylation" value="2 sites"/>
</dbReference>
<dbReference type="PaxDb" id="10116-ENSRNOP00000044900"/>
<dbReference type="Ensembl" id="ENSRNOT00000107633.1">
    <property type="protein sequence ID" value="ENSRNOP00000086840.1"/>
    <property type="gene ID" value="ENSRNOG00000068082.1"/>
</dbReference>
<dbReference type="GeneID" id="54269"/>
<dbReference type="KEGG" id="rno:29269"/>
<dbReference type="KEGG" id="rno:54269"/>
<dbReference type="UCSC" id="RGD:3063">
    <property type="organism name" value="rat"/>
</dbReference>
<dbReference type="AGR" id="RGD:3063"/>
<dbReference type="AGR" id="RGD:3067"/>
<dbReference type="CTD" id="17231"/>
<dbReference type="CTD" id="54269"/>
<dbReference type="RGD" id="3063">
    <property type="gene designation" value="Mcpt10"/>
</dbReference>
<dbReference type="eggNOG" id="KOG3627">
    <property type="taxonomic scope" value="Eukaryota"/>
</dbReference>
<dbReference type="GeneTree" id="ENSGT01030000234551"/>
<dbReference type="InParanoid" id="Q06606"/>
<dbReference type="OrthoDB" id="5565075at2759"/>
<dbReference type="PhylomeDB" id="Q06606"/>
<dbReference type="TreeFam" id="TF333630"/>
<dbReference type="BRENDA" id="3.4.21.B3">
    <property type="organism ID" value="5301"/>
</dbReference>
<dbReference type="PRO" id="PR:Q06606"/>
<dbReference type="Proteomes" id="UP000002494">
    <property type="component" value="Chromosome 15"/>
</dbReference>
<dbReference type="GO" id="GO:0005615">
    <property type="term" value="C:extracellular space"/>
    <property type="evidence" value="ECO:0000318"/>
    <property type="project" value="GO_Central"/>
</dbReference>
<dbReference type="GO" id="GO:0004252">
    <property type="term" value="F:serine-type endopeptidase activity"/>
    <property type="evidence" value="ECO:0000318"/>
    <property type="project" value="GO_Central"/>
</dbReference>
<dbReference type="GO" id="GO:0051604">
    <property type="term" value="P:protein maturation"/>
    <property type="evidence" value="ECO:0000318"/>
    <property type="project" value="GO_Central"/>
</dbReference>
<dbReference type="GO" id="GO:0006508">
    <property type="term" value="P:proteolysis"/>
    <property type="evidence" value="ECO:0007669"/>
    <property type="project" value="UniProtKB-KW"/>
</dbReference>
<dbReference type="CDD" id="cd00190">
    <property type="entry name" value="Tryp_SPc"/>
    <property type="match status" value="1"/>
</dbReference>
<dbReference type="FunFam" id="2.40.10.10:FF:000014">
    <property type="entry name" value="Complement factor D"/>
    <property type="match status" value="1"/>
</dbReference>
<dbReference type="Gene3D" id="2.40.10.10">
    <property type="entry name" value="Trypsin-like serine proteases"/>
    <property type="match status" value="2"/>
</dbReference>
<dbReference type="InterPro" id="IPR009003">
    <property type="entry name" value="Peptidase_S1_PA"/>
</dbReference>
<dbReference type="InterPro" id="IPR043504">
    <property type="entry name" value="Peptidase_S1_PA_chymotrypsin"/>
</dbReference>
<dbReference type="InterPro" id="IPR001314">
    <property type="entry name" value="Peptidase_S1A"/>
</dbReference>
<dbReference type="InterPro" id="IPR001254">
    <property type="entry name" value="Trypsin_dom"/>
</dbReference>
<dbReference type="InterPro" id="IPR018114">
    <property type="entry name" value="TRYPSIN_HIS"/>
</dbReference>
<dbReference type="InterPro" id="IPR033116">
    <property type="entry name" value="TRYPSIN_SER"/>
</dbReference>
<dbReference type="PANTHER" id="PTHR24271">
    <property type="entry name" value="KALLIKREIN-RELATED"/>
    <property type="match status" value="1"/>
</dbReference>
<dbReference type="PANTHER" id="PTHR24271:SF22">
    <property type="entry name" value="MAST CELL PROTEASE 8"/>
    <property type="match status" value="1"/>
</dbReference>
<dbReference type="Pfam" id="PF00089">
    <property type="entry name" value="Trypsin"/>
    <property type="match status" value="1"/>
</dbReference>
<dbReference type="PRINTS" id="PR00722">
    <property type="entry name" value="CHYMOTRYPSIN"/>
</dbReference>
<dbReference type="SMART" id="SM00020">
    <property type="entry name" value="Tryp_SPc"/>
    <property type="match status" value="1"/>
</dbReference>
<dbReference type="SUPFAM" id="SSF50494">
    <property type="entry name" value="Trypsin-like serine proteases"/>
    <property type="match status" value="1"/>
</dbReference>
<dbReference type="PROSITE" id="PS50240">
    <property type="entry name" value="TRYPSIN_DOM"/>
    <property type="match status" value="1"/>
</dbReference>
<dbReference type="PROSITE" id="PS00134">
    <property type="entry name" value="TRYPSIN_HIS"/>
    <property type="match status" value="1"/>
</dbReference>
<dbReference type="PROSITE" id="PS00135">
    <property type="entry name" value="TRYPSIN_SER"/>
    <property type="match status" value="1"/>
</dbReference>
<feature type="signal peptide" evidence="1">
    <location>
        <begin position="1"/>
        <end position="18"/>
    </location>
</feature>
<feature type="propeptide" id="PRO_0000027429" description="Activation peptide">
    <location>
        <begin position="19"/>
        <end position="20"/>
    </location>
</feature>
<feature type="chain" id="PRO_0000027430" description="Granzyme-like protein 2">
    <location>
        <begin position="21"/>
        <end position="248"/>
    </location>
</feature>
<feature type="domain" description="Peptidase S1" evidence="3">
    <location>
        <begin position="21"/>
        <end position="243"/>
    </location>
</feature>
<feature type="active site" description="Charge relay system" evidence="1">
    <location>
        <position position="65"/>
    </location>
</feature>
<feature type="active site" description="Charge relay system" evidence="1">
    <location>
        <position position="108"/>
    </location>
</feature>
<feature type="active site" description="Charge relay system" evidence="1">
    <location>
        <position position="201"/>
    </location>
</feature>
<feature type="glycosylation site" description="N-linked (GlcNAc...) asparagine" evidence="2">
    <location>
        <position position="152"/>
    </location>
</feature>
<feature type="glycosylation site" description="N-linked (GlcNAc...) asparagine" evidence="2">
    <location>
        <position position="180"/>
    </location>
</feature>
<feature type="disulfide bond" evidence="3">
    <location>
        <begin position="50"/>
        <end position="66"/>
    </location>
</feature>
<feature type="disulfide bond" evidence="3">
    <location>
        <begin position="142"/>
        <end position="207"/>
    </location>
</feature>
<feature type="disulfide bond" evidence="3">
    <location>
        <begin position="172"/>
        <end position="186"/>
    </location>
</feature>
<feature type="sequence conflict" description="In Ref. 1; CAA48624." evidence="4" ref="1">
    <original>I</original>
    <variation>F</variation>
    <location>
        <position position="6"/>
    </location>
</feature>
<feature type="sequence conflict" description="In Ref. 1; CAA48624." evidence="4" ref="1">
    <original>V</original>
    <variation>I</variation>
    <location>
        <position position="11"/>
    </location>
</feature>
<feature type="sequence conflict" description="In Ref. 1; CAA48624." evidence="4" ref="1">
    <original>V</original>
    <variation>I</variation>
    <location>
        <position position="22"/>
    </location>
</feature>
<feature type="sequence conflict" description="In Ref. 1; CAA48624." evidence="4" ref="1">
    <original>SLMFYYGNSYRHY</original>
    <variation>FIKFYDSNSEPHH</variation>
    <location>
        <begin position="37"/>
        <end position="49"/>
    </location>
</feature>
<feature type="sequence conflict" description="In Ref. 1; CAA48624." evidence="4" ref="1">
    <original>ESNIKVI</original>
    <variation>GRNIKVT</variation>
    <location>
        <begin position="68"/>
        <end position="74"/>
    </location>
</feature>
<feature type="sequence conflict" description="In Ref. 1; CAA48624." evidence="4" ref="1">
    <original>R</original>
    <variation>Q</variation>
    <location>
        <position position="83"/>
    </location>
</feature>
<feature type="sequence conflict" description="In Ref. 1; CAA48624." evidence="4" ref="1">
    <original>F</original>
    <variation>I</variation>
    <location>
        <position position="89"/>
    </location>
</feature>
<feature type="sequence conflict" description="In Ref. 1; CAA48624." evidence="4" ref="1">
    <original>SHSL</original>
    <variation>RDSH</variation>
    <location>
        <begin position="102"/>
        <end position="105"/>
    </location>
</feature>
<feature type="sequence conflict" description="In Ref. 1; CAA48624." evidence="4" ref="1">
    <original>L</original>
    <variation>S</variation>
    <location>
        <position position="155"/>
    </location>
</feature>
<feature type="sequence conflict" description="In Ref. 1; CAA48624." evidence="4" ref="1">
    <original>G</original>
    <variation>D</variation>
    <location>
        <position position="174"/>
    </location>
</feature>
<feature type="sequence conflict" description="In Ref. 1; CAA48624." evidence="4" ref="1">
    <original>R</original>
    <variation>Y</variation>
    <location>
        <position position="217"/>
    </location>
</feature>
<feature type="sequence conflict" description="In Ref. 1; CAA48624." evidence="4" ref="1">
    <original>T</original>
    <variation>S</variation>
    <location>
        <position position="233"/>
    </location>
</feature>
<feature type="sequence conflict" description="In Ref. 1; CAA48624." evidence="4" ref="1">
    <original>LLQQP</original>
    <variation>VLQQS</variation>
    <location>
        <begin position="244"/>
        <end position="248"/>
    </location>
</feature>
<reference key="1">
    <citation type="journal article" date="1993" name="FEBS Lett.">
        <title>Identification, sequence analysis, and characterization of cDNA clones encoding two granzyme-like serine proteinases from rat duodenum.</title>
        <authorList>
            <person name="Amerik A.Y."/>
            <person name="Yarovoi S.V."/>
            <person name="Grigorenko V.G."/>
            <person name="Antonov V.K."/>
        </authorList>
    </citation>
    <scope>NUCLEOTIDE SEQUENCE [MRNA]</scope>
    <source>
        <tissue>Duodenum</tissue>
    </source>
</reference>
<keyword id="KW-1015">Disulfide bond</keyword>
<keyword id="KW-0325">Glycoprotein</keyword>
<keyword id="KW-0378">Hydrolase</keyword>
<keyword id="KW-0645">Protease</keyword>
<keyword id="KW-1185">Reference proteome</keyword>
<keyword id="KW-0720">Serine protease</keyword>
<keyword id="KW-0732">Signal</keyword>
<keyword id="KW-0865">Zymogen</keyword>
<gene>
    <name evidence="5" type="primary">Mcpt10</name>
</gene>
<proteinExistence type="evidence at transcript level"/>
<organism>
    <name type="scientific">Rattus norvegicus</name>
    <name type="common">Rat</name>
    <dbReference type="NCBI Taxonomy" id="10116"/>
    <lineage>
        <taxon>Eukaryota</taxon>
        <taxon>Metazoa</taxon>
        <taxon>Chordata</taxon>
        <taxon>Craniata</taxon>
        <taxon>Vertebrata</taxon>
        <taxon>Euteleostomi</taxon>
        <taxon>Mammalia</taxon>
        <taxon>Eutheria</taxon>
        <taxon>Euarchontoglires</taxon>
        <taxon>Glires</taxon>
        <taxon>Rodentia</taxon>
        <taxon>Myomorpha</taxon>
        <taxon>Muroidea</taxon>
        <taxon>Muridae</taxon>
        <taxon>Murinae</taxon>
        <taxon>Rattus</taxon>
    </lineage>
</organism>
<sequence>MFLFLIFLVAVLPVNTEGGEIVWGTESKPHSRPYMASLMFYYGNSYRHYCGGFLVAKDIVMTAAHCNESNIKVILGAHNIKKRENTQVFSVVKAKPHENYDSHSLFNDIMLLKLERKAQLNGVVKTIALPRSQDWVKPGQVCTVAGWGRLANCTLSNTLQEVNLEVQKGQKCQGMSEDYNDSIQLCVGNPSEGKATGKGDSGGPFVCDGVAQGIVSRRLCTGTLPRVFTRISTFIPWIQKTMKLLQQP</sequence>
<name>GRZ2_RAT</name>